<organism>
    <name type="scientific">Escherichia coli O6:H1 (strain CFT073 / ATCC 700928 / UPEC)</name>
    <dbReference type="NCBI Taxonomy" id="199310"/>
    <lineage>
        <taxon>Bacteria</taxon>
        <taxon>Pseudomonadati</taxon>
        <taxon>Pseudomonadota</taxon>
        <taxon>Gammaproteobacteria</taxon>
        <taxon>Enterobacterales</taxon>
        <taxon>Enterobacteriaceae</taxon>
        <taxon>Escherichia</taxon>
    </lineage>
</organism>
<accession>Q8FF10</accession>
<keyword id="KW-0007">Acetylation</keyword>
<keyword id="KW-0556">Organic radical</keyword>
<keyword id="KW-1185">Reference proteome</keyword>
<gene>
    <name evidence="1" type="primary">grcA</name>
    <name type="ordered locus">c3103</name>
</gene>
<reference key="1">
    <citation type="journal article" date="2002" name="Proc. Natl. Acad. Sci. U.S.A.">
        <title>Extensive mosaic structure revealed by the complete genome sequence of uropathogenic Escherichia coli.</title>
        <authorList>
            <person name="Welch R.A."/>
            <person name="Burland V."/>
            <person name="Plunkett G. III"/>
            <person name="Redford P."/>
            <person name="Roesch P."/>
            <person name="Rasko D."/>
            <person name="Buckles E.L."/>
            <person name="Liou S.-R."/>
            <person name="Boutin A."/>
            <person name="Hackett J."/>
            <person name="Stroud D."/>
            <person name="Mayhew G.F."/>
            <person name="Rose D.J."/>
            <person name="Zhou S."/>
            <person name="Schwartz D.C."/>
            <person name="Perna N.T."/>
            <person name="Mobley H.L.T."/>
            <person name="Donnenberg M.S."/>
            <person name="Blattner F.R."/>
        </authorList>
    </citation>
    <scope>NUCLEOTIDE SEQUENCE [LARGE SCALE GENOMIC DNA]</scope>
    <source>
        <strain>CFT073 / ATCC 700928 / UPEC</strain>
    </source>
</reference>
<sequence length="127" mass="14268">MITGIQITKAANDDLLNSFWLLDSEKGEARCIVAKAGFAEDEVVAVSKLGDIEYREVPVEVKPEVRVEGGQHLNVNVLRRETLEDAVKHPEKYPQLTIRVSGYAVRFNSLTPEQQRDVIARTFTESL</sequence>
<evidence type="ECO:0000255" key="1">
    <source>
        <dbReference type="HAMAP-Rule" id="MF_00806"/>
    </source>
</evidence>
<evidence type="ECO:0000305" key="2"/>
<protein>
    <recommendedName>
        <fullName evidence="1">Autonomous glycyl radical cofactor</fullName>
    </recommendedName>
</protein>
<feature type="chain" id="PRO_0000166699" description="Autonomous glycyl radical cofactor">
    <location>
        <begin position="1"/>
        <end position="127"/>
    </location>
</feature>
<feature type="domain" description="Glycine radical" evidence="1">
    <location>
        <begin position="5"/>
        <end position="127"/>
    </location>
</feature>
<feature type="modified residue" description="N6-acetyllysine" evidence="1">
    <location>
        <position position="48"/>
    </location>
</feature>
<feature type="modified residue" description="N6-acetyllysine" evidence="1">
    <location>
        <position position="88"/>
    </location>
</feature>
<feature type="modified residue" description="N6-acetyllysine" evidence="1">
    <location>
        <position position="92"/>
    </location>
</feature>
<feature type="modified residue" description="Glycine radical" evidence="1">
    <location>
        <position position="102"/>
    </location>
</feature>
<comment type="function">
    <text evidence="1">Acts as a radical domain for damaged PFL and possibly other radical proteins.</text>
</comment>
<comment type="sequence caution" evidence="2">
    <conflict type="erroneous initiation">
        <sequence resource="EMBL-CDS" id="AAN81552"/>
    </conflict>
</comment>
<proteinExistence type="inferred from homology"/>
<dbReference type="EMBL" id="AE014075">
    <property type="protein sequence ID" value="AAN81552.1"/>
    <property type="status" value="ALT_INIT"/>
    <property type="molecule type" value="Genomic_DNA"/>
</dbReference>
<dbReference type="RefSeq" id="WP_000627804.1">
    <property type="nucleotide sequence ID" value="NZ_CP051263.1"/>
</dbReference>
<dbReference type="SMR" id="Q8FF10"/>
<dbReference type="STRING" id="199310.c3103"/>
<dbReference type="GeneID" id="89517377"/>
<dbReference type="KEGG" id="ecc:c3103"/>
<dbReference type="eggNOG" id="COG3445">
    <property type="taxonomic scope" value="Bacteria"/>
</dbReference>
<dbReference type="HOGENOM" id="CLU_133780_0_0_6"/>
<dbReference type="Proteomes" id="UP000001410">
    <property type="component" value="Chromosome"/>
</dbReference>
<dbReference type="GO" id="GO:0005829">
    <property type="term" value="C:cytosol"/>
    <property type="evidence" value="ECO:0007669"/>
    <property type="project" value="TreeGrafter"/>
</dbReference>
<dbReference type="GO" id="GO:0008861">
    <property type="term" value="F:formate C-acetyltransferase activity"/>
    <property type="evidence" value="ECO:0007669"/>
    <property type="project" value="TreeGrafter"/>
</dbReference>
<dbReference type="FunFam" id="3.20.70.20:FF:000002">
    <property type="entry name" value="Autonomous glycyl radical cofactor"/>
    <property type="match status" value="1"/>
</dbReference>
<dbReference type="Gene3D" id="3.20.70.20">
    <property type="match status" value="1"/>
</dbReference>
<dbReference type="HAMAP" id="MF_00806">
    <property type="entry name" value="GrcA"/>
    <property type="match status" value="1"/>
</dbReference>
<dbReference type="InterPro" id="IPR050244">
    <property type="entry name" value="Auton_GlycylRad_Cofactor"/>
</dbReference>
<dbReference type="InterPro" id="IPR019777">
    <property type="entry name" value="Form_AcTrfase_GR_CS"/>
</dbReference>
<dbReference type="InterPro" id="IPR001150">
    <property type="entry name" value="Gly_radical"/>
</dbReference>
<dbReference type="InterPro" id="IPR011140">
    <property type="entry name" value="Glycyl_radical_cofactor_GrcA"/>
</dbReference>
<dbReference type="NCBIfam" id="TIGR04365">
    <property type="entry name" value="spare_glycyl"/>
    <property type="match status" value="1"/>
</dbReference>
<dbReference type="PANTHER" id="PTHR30191">
    <property type="entry name" value="FORMATE ACETYLTRANSFERASE"/>
    <property type="match status" value="1"/>
</dbReference>
<dbReference type="PANTHER" id="PTHR30191:SF0">
    <property type="entry name" value="FORMATE ACETYLTRANSFERASE 1"/>
    <property type="match status" value="1"/>
</dbReference>
<dbReference type="Pfam" id="PF01228">
    <property type="entry name" value="Gly_radical"/>
    <property type="match status" value="1"/>
</dbReference>
<dbReference type="PIRSF" id="PIRSF000378">
    <property type="entry name" value="Gly_radicl_yfiD"/>
    <property type="match status" value="1"/>
</dbReference>
<dbReference type="SUPFAM" id="SSF51998">
    <property type="entry name" value="PFL-like glycyl radical enzymes"/>
    <property type="match status" value="1"/>
</dbReference>
<dbReference type="PROSITE" id="PS00850">
    <property type="entry name" value="GLY_RADICAL_1"/>
    <property type="match status" value="1"/>
</dbReference>
<dbReference type="PROSITE" id="PS51149">
    <property type="entry name" value="GLY_RADICAL_2"/>
    <property type="match status" value="1"/>
</dbReference>
<name>GRCA_ECOL6</name>